<organism>
    <name type="scientific">Frankia alni</name>
    <dbReference type="NCBI Taxonomy" id="1859"/>
    <lineage>
        <taxon>Bacteria</taxon>
        <taxon>Bacillati</taxon>
        <taxon>Actinomycetota</taxon>
        <taxon>Actinomycetes</taxon>
        <taxon>Frankiales</taxon>
        <taxon>Frankiaceae</taxon>
        <taxon>Frankia</taxon>
    </lineage>
</organism>
<dbReference type="EC" id="4.-.-.-"/>
<dbReference type="EMBL" id="L29299">
    <property type="protein sequence ID" value="AAC82975.1"/>
    <property type="molecule type" value="Genomic_DNA"/>
</dbReference>
<dbReference type="PIR" id="T09237">
    <property type="entry name" value="T09237"/>
</dbReference>
<dbReference type="SMR" id="P46044"/>
<dbReference type="UniPathway" id="UPA00782"/>
<dbReference type="GO" id="GO:0051539">
    <property type="term" value="F:4 iron, 4 sulfur cluster binding"/>
    <property type="evidence" value="ECO:0007669"/>
    <property type="project" value="UniProtKB-KW"/>
</dbReference>
<dbReference type="GO" id="GO:0016829">
    <property type="term" value="F:lyase activity"/>
    <property type="evidence" value="ECO:0007669"/>
    <property type="project" value="UniProtKB-KW"/>
</dbReference>
<dbReference type="GO" id="GO:0046872">
    <property type="term" value="F:metal ion binding"/>
    <property type="evidence" value="ECO:0007669"/>
    <property type="project" value="UniProtKB-KW"/>
</dbReference>
<dbReference type="GO" id="GO:0009399">
    <property type="term" value="P:nitrogen fixation"/>
    <property type="evidence" value="ECO:0007669"/>
    <property type="project" value="UniProtKB-KW"/>
</dbReference>
<dbReference type="CDD" id="cd00852">
    <property type="entry name" value="NifB"/>
    <property type="match status" value="1"/>
</dbReference>
<dbReference type="CDD" id="cd01335">
    <property type="entry name" value="Radical_SAM"/>
    <property type="match status" value="1"/>
</dbReference>
<dbReference type="Gene3D" id="3.20.20.70">
    <property type="entry name" value="Aldolase class I"/>
    <property type="match status" value="1"/>
</dbReference>
<dbReference type="Gene3D" id="3.30.420.130">
    <property type="entry name" value="Dinitrogenase iron-molybdenum cofactor biosynthesis domain"/>
    <property type="match status" value="1"/>
</dbReference>
<dbReference type="InterPro" id="IPR013785">
    <property type="entry name" value="Aldolase_TIM"/>
</dbReference>
<dbReference type="InterPro" id="IPR003731">
    <property type="entry name" value="Di-Nase_FeMo-co_biosynth"/>
</dbReference>
<dbReference type="InterPro" id="IPR036105">
    <property type="entry name" value="DiNase_FeMo-co_biosyn_sf"/>
</dbReference>
<dbReference type="InterPro" id="IPR006638">
    <property type="entry name" value="Elp3/MiaA/NifB-like_rSAM"/>
</dbReference>
<dbReference type="InterPro" id="IPR000385">
    <property type="entry name" value="MoaA_NifB_PqqE_Fe-S-bd_CS"/>
</dbReference>
<dbReference type="InterPro" id="IPR005980">
    <property type="entry name" value="Nase_CF_NifB"/>
</dbReference>
<dbReference type="InterPro" id="IPR034165">
    <property type="entry name" value="NifB_C"/>
</dbReference>
<dbReference type="InterPro" id="IPR007197">
    <property type="entry name" value="rSAM"/>
</dbReference>
<dbReference type="NCBIfam" id="TIGR01290">
    <property type="entry name" value="nifB"/>
    <property type="match status" value="1"/>
</dbReference>
<dbReference type="PANTHER" id="PTHR43787:SF13">
    <property type="entry name" value="FEMO COFACTOR BIOSYNTHESIS PROTEIN NIFB"/>
    <property type="match status" value="1"/>
</dbReference>
<dbReference type="PANTHER" id="PTHR43787">
    <property type="entry name" value="FEMO COFACTOR BIOSYNTHESIS PROTEIN NIFB-RELATED"/>
    <property type="match status" value="1"/>
</dbReference>
<dbReference type="Pfam" id="PF02579">
    <property type="entry name" value="Nitro_FeMo-Co"/>
    <property type="match status" value="1"/>
</dbReference>
<dbReference type="Pfam" id="PF04055">
    <property type="entry name" value="Radical_SAM"/>
    <property type="match status" value="1"/>
</dbReference>
<dbReference type="SFLD" id="SFLDF00281">
    <property type="entry name" value="FeMo_cofactor_biosynthesis_pro"/>
    <property type="match status" value="1"/>
</dbReference>
<dbReference type="SFLD" id="SFLDS00029">
    <property type="entry name" value="Radical_SAM"/>
    <property type="match status" value="1"/>
</dbReference>
<dbReference type="SFLD" id="SFLDG01067">
    <property type="entry name" value="SPASM/twitch_domain_containing"/>
    <property type="match status" value="1"/>
</dbReference>
<dbReference type="SMART" id="SM00729">
    <property type="entry name" value="Elp3"/>
    <property type="match status" value="1"/>
</dbReference>
<dbReference type="SUPFAM" id="SSF53146">
    <property type="entry name" value="Nitrogenase accessory factor-like"/>
    <property type="match status" value="1"/>
</dbReference>
<dbReference type="SUPFAM" id="SSF102114">
    <property type="entry name" value="Radical SAM enzymes"/>
    <property type="match status" value="1"/>
</dbReference>
<dbReference type="PROSITE" id="PS01305">
    <property type="entry name" value="MOAA_NIFB_PQQE"/>
    <property type="match status" value="1"/>
</dbReference>
<dbReference type="PROSITE" id="PS51918">
    <property type="entry name" value="RADICAL_SAM"/>
    <property type="match status" value="1"/>
</dbReference>
<accession>P46044</accession>
<comment type="function">
    <text evidence="1">Involved in the biosynthesis of the iron-molybdenum cofactor (FeMo-co or M-cluster) found in the dinitrogenase enzyme of the nitrogenase complex in nitrogen-fixing microorganisms. NifB catalyzes the crucial step of radical SAM-dependent carbide insertion that occurs concomitant with the insertion of a 9th sulfur and the rearrangement/coupling of two [4Fe-4S] clusters into a [8Fe-9S-C] cluster, the precursor to the M-cluster.</text>
</comment>
<comment type="cofactor">
    <cofactor evidence="1">
        <name>[4Fe-4S] cluster</name>
        <dbReference type="ChEBI" id="CHEBI:49883"/>
    </cofactor>
    <text evidence="1">Binds 3 [4Fe-4S] clusters per monomer. One cluster is coordinated with 3 cysteines and an exchangeable S-adenosyl-L-methionine. The two others probably act as substrate.</text>
</comment>
<comment type="pathway">
    <text evidence="1">Cofactor biosynthesis; Fe-Mo cofactor biosynthesis.</text>
</comment>
<comment type="similarity">
    <text evidence="5">Belongs to the radical SAM superfamily. NifB family.</text>
</comment>
<reference key="1">
    <citation type="journal article" date="1995" name="Gene">
        <title>Sequences of nifX, nifW, nifZ, nifB and two ORF in the Frankia nitrogen fixation gene cluster.</title>
        <authorList>
            <person name="Harriott O.T."/>
            <person name="Hosted T.J."/>
            <person name="Benson D.R."/>
        </authorList>
    </citation>
    <scope>NUCLEOTIDE SEQUENCE [GENOMIC DNA]</scope>
    <source>
        <strain>CpI1</strain>
    </source>
</reference>
<sequence>MTGEPAFAAAPAGGLPRRSAQAPASAGGCKTTTSCGTSAPVQDPEIAEKIANHPCYTAEAHQYYARMHVAVAPGCNIQCNFCNRKFDCANESRPGVTSTLLTPEDALAKVNVVASEIKQMSVLGIAGPGDPLANPKPTFRTIELVARDCPDIKLCLSTNGLRLPEFVDRIADLNVDHVTITINMIDPEVGERIYPWVAWRGKRYTGREASKILSEQQLAGLAALTERKILCKVNSVMIPGINDEHLVEVSRTVKGLGAFLHNVMPLVSAPEHGTVFGLTGQRGPTPQELKALQDRCEQDDGAEMNMMRHCRQCRADAVGLLGEDRGDDFLPETFQGREIVYDLAGRQQAHEEIERWRTEVAATRQTLNIATGARTPDVPAAEPVRPAEVVLVAVATKGSGVVNQHFGHAGEFWIYEAGPGWARLVQTRDVDRYCNGPSDCDEDASKLDRTIEMLSDCAAVLCSKIGLGPREALEEAGIEPVEIYDLIDKAVAEIGARLVTDRAPAEVGTP</sequence>
<evidence type="ECO:0000250" key="1">
    <source>
        <dbReference type="UniProtKB" id="D5VRM1"/>
    </source>
</evidence>
<evidence type="ECO:0000250" key="2">
    <source>
        <dbReference type="UniProtKB" id="P69848"/>
    </source>
</evidence>
<evidence type="ECO:0000255" key="3">
    <source>
        <dbReference type="PROSITE-ProRule" id="PRU01266"/>
    </source>
</evidence>
<evidence type="ECO:0000256" key="4">
    <source>
        <dbReference type="SAM" id="MobiDB-lite"/>
    </source>
</evidence>
<evidence type="ECO:0000305" key="5"/>
<name>NIFB_FRAAL</name>
<feature type="chain" id="PRO_0000153038" description="FeMo cofactor biosynthesis protein NifB">
    <location>
        <begin position="1"/>
        <end position="510"/>
    </location>
</feature>
<feature type="domain" description="Radical SAM core" evidence="3">
    <location>
        <begin position="61"/>
        <end position="308"/>
    </location>
</feature>
<feature type="region of interest" description="Disordered" evidence="4">
    <location>
        <begin position="1"/>
        <end position="34"/>
    </location>
</feature>
<feature type="compositionally biased region" description="Low complexity" evidence="4">
    <location>
        <begin position="1"/>
        <end position="16"/>
    </location>
</feature>
<feature type="compositionally biased region" description="Low complexity" evidence="4">
    <location>
        <begin position="25"/>
        <end position="34"/>
    </location>
</feature>
<feature type="binding site" evidence="2">
    <location>
        <position position="75"/>
    </location>
    <ligand>
        <name>[4Fe-4S] cluster</name>
        <dbReference type="ChEBI" id="CHEBI:49883"/>
        <label>1</label>
        <note>4Fe-4S-S-AdoMet</note>
    </ligand>
</feature>
<feature type="binding site" evidence="2">
    <location>
        <position position="79"/>
    </location>
    <ligand>
        <name>[4Fe-4S] cluster</name>
        <dbReference type="ChEBI" id="CHEBI:49883"/>
        <label>1</label>
        <note>4Fe-4S-S-AdoMet</note>
    </ligand>
</feature>
<feature type="binding site" evidence="2">
    <location>
        <position position="82"/>
    </location>
    <ligand>
        <name>[4Fe-4S] cluster</name>
        <dbReference type="ChEBI" id="CHEBI:49883"/>
        <label>1</label>
        <note>4Fe-4S-S-AdoMet</note>
    </ligand>
</feature>
<feature type="binding site" evidence="2">
    <location>
        <position position="129"/>
    </location>
    <ligand>
        <name>S-adenosyl-L-methionine</name>
        <dbReference type="ChEBI" id="CHEBI:59789"/>
    </ligand>
</feature>
<feature type="binding site" evidence="2">
    <location>
        <position position="181"/>
    </location>
    <ligand>
        <name>S-adenosyl-L-methionine</name>
        <dbReference type="ChEBI" id="CHEBI:59789"/>
    </ligand>
</feature>
<feature type="binding site" evidence="1">
    <location>
        <position position="310"/>
    </location>
    <ligand>
        <name>[4Fe-4S] cluster</name>
        <dbReference type="ChEBI" id="CHEBI:49883"/>
        <label>2</label>
    </ligand>
</feature>
<feature type="binding site" evidence="1">
    <location>
        <position position="313"/>
    </location>
    <ligand>
        <name>[4Fe-4S] cluster</name>
        <dbReference type="ChEBI" id="CHEBI:49883"/>
        <label>2</label>
    </ligand>
</feature>
<protein>
    <recommendedName>
        <fullName>FeMo cofactor biosynthesis protein NifB</fullName>
        <ecNumber>4.-.-.-</ecNumber>
    </recommendedName>
    <alternativeName>
        <fullName>Nitrogenase cofactor maturase NifB</fullName>
    </alternativeName>
    <alternativeName>
        <fullName>Radical SAM assemblase NifB</fullName>
    </alternativeName>
</protein>
<keyword id="KW-0004">4Fe-4S</keyword>
<keyword id="KW-0408">Iron</keyword>
<keyword id="KW-0411">Iron-sulfur</keyword>
<keyword id="KW-0456">Lyase</keyword>
<keyword id="KW-0479">Metal-binding</keyword>
<keyword id="KW-0535">Nitrogen fixation</keyword>
<keyword id="KW-0949">S-adenosyl-L-methionine</keyword>
<gene>
    <name type="primary">nifB</name>
</gene>
<proteinExistence type="inferred from homology"/>